<comment type="function">
    <text evidence="1">Catalyzes the attachment of tyrosine to tRNA(Tyr) in a two-step reaction: tyrosine is first activated by ATP to form Tyr-AMP and then transferred to the acceptor end of tRNA(Tyr).</text>
</comment>
<comment type="catalytic activity">
    <reaction evidence="1">
        <text>tRNA(Tyr) + L-tyrosine + ATP = L-tyrosyl-tRNA(Tyr) + AMP + diphosphate + H(+)</text>
        <dbReference type="Rhea" id="RHEA:10220"/>
        <dbReference type="Rhea" id="RHEA-COMP:9706"/>
        <dbReference type="Rhea" id="RHEA-COMP:9707"/>
        <dbReference type="ChEBI" id="CHEBI:15378"/>
        <dbReference type="ChEBI" id="CHEBI:30616"/>
        <dbReference type="ChEBI" id="CHEBI:33019"/>
        <dbReference type="ChEBI" id="CHEBI:58315"/>
        <dbReference type="ChEBI" id="CHEBI:78442"/>
        <dbReference type="ChEBI" id="CHEBI:78536"/>
        <dbReference type="ChEBI" id="CHEBI:456215"/>
        <dbReference type="EC" id="6.1.1.1"/>
    </reaction>
</comment>
<comment type="subunit">
    <text evidence="1">Homodimer.</text>
</comment>
<comment type="subcellular location">
    <subcellularLocation>
        <location evidence="1">Cytoplasm</location>
    </subcellularLocation>
</comment>
<comment type="similarity">
    <text evidence="1">Belongs to the class-I aminoacyl-tRNA synthetase family. TyrS type 1 subfamily.</text>
</comment>
<evidence type="ECO:0000255" key="1">
    <source>
        <dbReference type="HAMAP-Rule" id="MF_02006"/>
    </source>
</evidence>
<gene>
    <name evidence="1" type="primary">tyrS</name>
    <name type="ordered locus">ETA_17870</name>
</gene>
<reference key="1">
    <citation type="journal article" date="2008" name="Environ. Microbiol.">
        <title>The genome of Erwinia tasmaniensis strain Et1/99, a non-pathogenic bacterium in the genus Erwinia.</title>
        <authorList>
            <person name="Kube M."/>
            <person name="Migdoll A.M."/>
            <person name="Mueller I."/>
            <person name="Kuhl H."/>
            <person name="Beck A."/>
            <person name="Reinhardt R."/>
            <person name="Geider K."/>
        </authorList>
    </citation>
    <scope>NUCLEOTIDE SEQUENCE [LARGE SCALE GENOMIC DNA]</scope>
    <source>
        <strain>DSM 17950 / CFBP 7177 / CIP 109463 / NCPPB 4357 / Et1/99</strain>
    </source>
</reference>
<name>SYY_ERWT9</name>
<feature type="chain" id="PRO_1000189298" description="Tyrosine--tRNA ligase">
    <location>
        <begin position="1"/>
        <end position="425"/>
    </location>
</feature>
<feature type="domain" description="S4 RNA-binding" evidence="1">
    <location>
        <begin position="357"/>
        <end position="415"/>
    </location>
</feature>
<feature type="short sequence motif" description="'HIGH' region">
    <location>
        <begin position="42"/>
        <end position="51"/>
    </location>
</feature>
<feature type="short sequence motif" description="'KMSKS' region">
    <location>
        <begin position="235"/>
        <end position="239"/>
    </location>
</feature>
<feature type="binding site" evidence="1">
    <location>
        <position position="37"/>
    </location>
    <ligand>
        <name>L-tyrosine</name>
        <dbReference type="ChEBI" id="CHEBI:58315"/>
    </ligand>
</feature>
<feature type="binding site" evidence="1">
    <location>
        <position position="175"/>
    </location>
    <ligand>
        <name>L-tyrosine</name>
        <dbReference type="ChEBI" id="CHEBI:58315"/>
    </ligand>
</feature>
<feature type="binding site" evidence="1">
    <location>
        <position position="179"/>
    </location>
    <ligand>
        <name>L-tyrosine</name>
        <dbReference type="ChEBI" id="CHEBI:58315"/>
    </ligand>
</feature>
<feature type="binding site" evidence="1">
    <location>
        <position position="238"/>
    </location>
    <ligand>
        <name>ATP</name>
        <dbReference type="ChEBI" id="CHEBI:30616"/>
    </ligand>
</feature>
<sequence>MASSNLIKQLQERGLVAQVTDENALAERLAQGPIALYCGFDPTADSLHLGHLVPLLCLKRFQDAGHKPVALVGGATGLIGDPSFKAAERKLNTSETVNQWVEKIRQQVAPFLSFNCGDNSAIAANNYDWFGSMNVLTFLRDIGKHFSVNQMINKEAVKQRLNRDDQGISFTEFSYNLLQGYDFACLNERYGVALQIGGSDQWGNITSGIDLTRRLHQNQVFGLTVPLITKSDGTKFGKTEGGAVWLDAAKTSPYKFYQFWINTADADVYRFLKFFTFMSLEEINQLEEEDKSSGKAPRAQGVLAELVTRLVHGEEGLIAAQRITRSLFAGNVTELTANDLSQLAQDGMPGIELKIGQDLQQALVNAELAPSRGQARKLIEAKSVSINGSLQTDAEYTFGEDDRLFGQYTLLRRGKKNYSLISWQS</sequence>
<accession>B2VEN3</accession>
<organism>
    <name type="scientific">Erwinia tasmaniensis (strain DSM 17950 / CFBP 7177 / CIP 109463 / NCPPB 4357 / Et1/99)</name>
    <dbReference type="NCBI Taxonomy" id="465817"/>
    <lineage>
        <taxon>Bacteria</taxon>
        <taxon>Pseudomonadati</taxon>
        <taxon>Pseudomonadota</taxon>
        <taxon>Gammaproteobacteria</taxon>
        <taxon>Enterobacterales</taxon>
        <taxon>Erwiniaceae</taxon>
        <taxon>Erwinia</taxon>
    </lineage>
</organism>
<keyword id="KW-0030">Aminoacyl-tRNA synthetase</keyword>
<keyword id="KW-0067">ATP-binding</keyword>
<keyword id="KW-0963">Cytoplasm</keyword>
<keyword id="KW-0436">Ligase</keyword>
<keyword id="KW-0547">Nucleotide-binding</keyword>
<keyword id="KW-0648">Protein biosynthesis</keyword>
<keyword id="KW-1185">Reference proteome</keyword>
<keyword id="KW-0694">RNA-binding</keyword>
<dbReference type="EC" id="6.1.1.1" evidence="1"/>
<dbReference type="EMBL" id="CU468135">
    <property type="protein sequence ID" value="CAO96833.1"/>
    <property type="molecule type" value="Genomic_DNA"/>
</dbReference>
<dbReference type="RefSeq" id="WP_012441522.1">
    <property type="nucleotide sequence ID" value="NC_010694.1"/>
</dbReference>
<dbReference type="SMR" id="B2VEN3"/>
<dbReference type="STRING" id="465817.ETA_17870"/>
<dbReference type="KEGG" id="eta:ETA_17870"/>
<dbReference type="eggNOG" id="COG0162">
    <property type="taxonomic scope" value="Bacteria"/>
</dbReference>
<dbReference type="HOGENOM" id="CLU_024003_0_3_6"/>
<dbReference type="OrthoDB" id="9804243at2"/>
<dbReference type="Proteomes" id="UP000001726">
    <property type="component" value="Chromosome"/>
</dbReference>
<dbReference type="GO" id="GO:0005829">
    <property type="term" value="C:cytosol"/>
    <property type="evidence" value="ECO:0007669"/>
    <property type="project" value="TreeGrafter"/>
</dbReference>
<dbReference type="GO" id="GO:0005524">
    <property type="term" value="F:ATP binding"/>
    <property type="evidence" value="ECO:0007669"/>
    <property type="project" value="UniProtKB-UniRule"/>
</dbReference>
<dbReference type="GO" id="GO:0003723">
    <property type="term" value="F:RNA binding"/>
    <property type="evidence" value="ECO:0007669"/>
    <property type="project" value="UniProtKB-KW"/>
</dbReference>
<dbReference type="GO" id="GO:0004831">
    <property type="term" value="F:tyrosine-tRNA ligase activity"/>
    <property type="evidence" value="ECO:0007669"/>
    <property type="project" value="UniProtKB-UniRule"/>
</dbReference>
<dbReference type="GO" id="GO:0006437">
    <property type="term" value="P:tyrosyl-tRNA aminoacylation"/>
    <property type="evidence" value="ECO:0007669"/>
    <property type="project" value="UniProtKB-UniRule"/>
</dbReference>
<dbReference type="CDD" id="cd00165">
    <property type="entry name" value="S4"/>
    <property type="match status" value="1"/>
</dbReference>
<dbReference type="CDD" id="cd00805">
    <property type="entry name" value="TyrRS_core"/>
    <property type="match status" value="1"/>
</dbReference>
<dbReference type="FunFam" id="1.10.240.10:FF:000001">
    <property type="entry name" value="Tyrosine--tRNA ligase"/>
    <property type="match status" value="1"/>
</dbReference>
<dbReference type="FunFam" id="3.40.50.620:FF:000008">
    <property type="entry name" value="Tyrosine--tRNA ligase"/>
    <property type="match status" value="1"/>
</dbReference>
<dbReference type="Gene3D" id="3.40.50.620">
    <property type="entry name" value="HUPs"/>
    <property type="match status" value="1"/>
</dbReference>
<dbReference type="Gene3D" id="3.10.290.10">
    <property type="entry name" value="RNA-binding S4 domain"/>
    <property type="match status" value="1"/>
</dbReference>
<dbReference type="Gene3D" id="1.10.240.10">
    <property type="entry name" value="Tyrosyl-Transfer RNA Synthetase"/>
    <property type="match status" value="1"/>
</dbReference>
<dbReference type="HAMAP" id="MF_02006">
    <property type="entry name" value="Tyr_tRNA_synth_type1"/>
    <property type="match status" value="1"/>
</dbReference>
<dbReference type="InterPro" id="IPR001412">
    <property type="entry name" value="aa-tRNA-synth_I_CS"/>
</dbReference>
<dbReference type="InterPro" id="IPR002305">
    <property type="entry name" value="aa-tRNA-synth_Ic"/>
</dbReference>
<dbReference type="InterPro" id="IPR014729">
    <property type="entry name" value="Rossmann-like_a/b/a_fold"/>
</dbReference>
<dbReference type="InterPro" id="IPR002942">
    <property type="entry name" value="S4_RNA-bd"/>
</dbReference>
<dbReference type="InterPro" id="IPR036986">
    <property type="entry name" value="S4_RNA-bd_sf"/>
</dbReference>
<dbReference type="InterPro" id="IPR054608">
    <property type="entry name" value="SYY-like_C"/>
</dbReference>
<dbReference type="InterPro" id="IPR002307">
    <property type="entry name" value="Tyr-tRNA-ligase"/>
</dbReference>
<dbReference type="InterPro" id="IPR024088">
    <property type="entry name" value="Tyr-tRNA-ligase_bac-type"/>
</dbReference>
<dbReference type="InterPro" id="IPR024107">
    <property type="entry name" value="Tyr-tRNA-ligase_bac_1"/>
</dbReference>
<dbReference type="NCBIfam" id="TIGR00234">
    <property type="entry name" value="tyrS"/>
    <property type="match status" value="1"/>
</dbReference>
<dbReference type="PANTHER" id="PTHR11766:SF0">
    <property type="entry name" value="TYROSINE--TRNA LIGASE, MITOCHONDRIAL"/>
    <property type="match status" value="1"/>
</dbReference>
<dbReference type="PANTHER" id="PTHR11766">
    <property type="entry name" value="TYROSYL-TRNA SYNTHETASE"/>
    <property type="match status" value="1"/>
</dbReference>
<dbReference type="Pfam" id="PF22421">
    <property type="entry name" value="SYY_C-terminal"/>
    <property type="match status" value="1"/>
</dbReference>
<dbReference type="Pfam" id="PF00579">
    <property type="entry name" value="tRNA-synt_1b"/>
    <property type="match status" value="1"/>
</dbReference>
<dbReference type="PRINTS" id="PR01040">
    <property type="entry name" value="TRNASYNTHTYR"/>
</dbReference>
<dbReference type="SMART" id="SM00363">
    <property type="entry name" value="S4"/>
    <property type="match status" value="1"/>
</dbReference>
<dbReference type="SUPFAM" id="SSF55174">
    <property type="entry name" value="Alpha-L RNA-binding motif"/>
    <property type="match status" value="1"/>
</dbReference>
<dbReference type="SUPFAM" id="SSF52374">
    <property type="entry name" value="Nucleotidylyl transferase"/>
    <property type="match status" value="1"/>
</dbReference>
<dbReference type="PROSITE" id="PS00178">
    <property type="entry name" value="AA_TRNA_LIGASE_I"/>
    <property type="match status" value="1"/>
</dbReference>
<dbReference type="PROSITE" id="PS50889">
    <property type="entry name" value="S4"/>
    <property type="match status" value="1"/>
</dbReference>
<protein>
    <recommendedName>
        <fullName evidence="1">Tyrosine--tRNA ligase</fullName>
        <ecNumber evidence="1">6.1.1.1</ecNumber>
    </recommendedName>
    <alternativeName>
        <fullName evidence="1">Tyrosyl-tRNA synthetase</fullName>
        <shortName evidence="1">TyrRS</shortName>
    </alternativeName>
</protein>
<proteinExistence type="inferred from homology"/>